<protein>
    <recommendedName>
        <fullName evidence="1">Large ribosomal subunit protein uL3</fullName>
    </recommendedName>
    <alternativeName>
        <fullName evidence="3">50S ribosomal protein L3</fullName>
    </alternativeName>
</protein>
<dbReference type="EMBL" id="CP001196">
    <property type="protein sequence ID" value="ACI92805.1"/>
    <property type="molecule type" value="Genomic_DNA"/>
</dbReference>
<dbReference type="EMBL" id="CP002826">
    <property type="protein sequence ID" value="AEI07030.1"/>
    <property type="molecule type" value="Genomic_DNA"/>
</dbReference>
<dbReference type="RefSeq" id="WP_012562834.1">
    <property type="nucleotide sequence ID" value="NC_015684.1"/>
</dbReference>
<dbReference type="SMR" id="B6JET3"/>
<dbReference type="STRING" id="504832.OCA5_c23300"/>
<dbReference type="KEGG" id="oca:OCAR_5677"/>
<dbReference type="KEGG" id="ocg:OCA5_c23300"/>
<dbReference type="PATRIC" id="fig|504832.7.peg.2455"/>
<dbReference type="eggNOG" id="COG0087">
    <property type="taxonomic scope" value="Bacteria"/>
</dbReference>
<dbReference type="HOGENOM" id="CLU_044142_2_0_5"/>
<dbReference type="OrthoDB" id="9806135at2"/>
<dbReference type="Proteomes" id="UP000007730">
    <property type="component" value="Chromosome"/>
</dbReference>
<dbReference type="GO" id="GO:0022625">
    <property type="term" value="C:cytosolic large ribosomal subunit"/>
    <property type="evidence" value="ECO:0007669"/>
    <property type="project" value="TreeGrafter"/>
</dbReference>
<dbReference type="GO" id="GO:0019843">
    <property type="term" value="F:rRNA binding"/>
    <property type="evidence" value="ECO:0007669"/>
    <property type="project" value="UniProtKB-UniRule"/>
</dbReference>
<dbReference type="GO" id="GO:0003735">
    <property type="term" value="F:structural constituent of ribosome"/>
    <property type="evidence" value="ECO:0007669"/>
    <property type="project" value="InterPro"/>
</dbReference>
<dbReference type="GO" id="GO:0006412">
    <property type="term" value="P:translation"/>
    <property type="evidence" value="ECO:0007669"/>
    <property type="project" value="UniProtKB-UniRule"/>
</dbReference>
<dbReference type="FunFam" id="2.40.30.10:FF:000004">
    <property type="entry name" value="50S ribosomal protein L3"/>
    <property type="match status" value="1"/>
</dbReference>
<dbReference type="FunFam" id="3.30.160.810:FF:000001">
    <property type="entry name" value="50S ribosomal protein L3"/>
    <property type="match status" value="1"/>
</dbReference>
<dbReference type="Gene3D" id="3.30.160.810">
    <property type="match status" value="1"/>
</dbReference>
<dbReference type="Gene3D" id="2.40.30.10">
    <property type="entry name" value="Translation factors"/>
    <property type="match status" value="1"/>
</dbReference>
<dbReference type="HAMAP" id="MF_01325_B">
    <property type="entry name" value="Ribosomal_uL3_B"/>
    <property type="match status" value="1"/>
</dbReference>
<dbReference type="InterPro" id="IPR000597">
    <property type="entry name" value="Ribosomal_uL3"/>
</dbReference>
<dbReference type="InterPro" id="IPR019927">
    <property type="entry name" value="Ribosomal_uL3_bac/org-type"/>
</dbReference>
<dbReference type="InterPro" id="IPR019926">
    <property type="entry name" value="Ribosomal_uL3_CS"/>
</dbReference>
<dbReference type="InterPro" id="IPR009000">
    <property type="entry name" value="Transl_B-barrel_sf"/>
</dbReference>
<dbReference type="NCBIfam" id="TIGR03625">
    <property type="entry name" value="L3_bact"/>
    <property type="match status" value="1"/>
</dbReference>
<dbReference type="PANTHER" id="PTHR11229">
    <property type="entry name" value="50S RIBOSOMAL PROTEIN L3"/>
    <property type="match status" value="1"/>
</dbReference>
<dbReference type="PANTHER" id="PTHR11229:SF16">
    <property type="entry name" value="LARGE RIBOSOMAL SUBUNIT PROTEIN UL3C"/>
    <property type="match status" value="1"/>
</dbReference>
<dbReference type="Pfam" id="PF00297">
    <property type="entry name" value="Ribosomal_L3"/>
    <property type="match status" value="1"/>
</dbReference>
<dbReference type="SUPFAM" id="SSF50447">
    <property type="entry name" value="Translation proteins"/>
    <property type="match status" value="1"/>
</dbReference>
<dbReference type="PROSITE" id="PS00474">
    <property type="entry name" value="RIBOSOMAL_L3"/>
    <property type="match status" value="1"/>
</dbReference>
<evidence type="ECO:0000255" key="1">
    <source>
        <dbReference type="HAMAP-Rule" id="MF_01325"/>
    </source>
</evidence>
<evidence type="ECO:0000256" key="2">
    <source>
        <dbReference type="SAM" id="MobiDB-lite"/>
    </source>
</evidence>
<evidence type="ECO:0000305" key="3"/>
<gene>
    <name evidence="1" type="primary">rplC</name>
    <name type="ordered locus">OCAR_5677</name>
    <name type="ordered locus">OCA5_c23300</name>
</gene>
<comment type="function">
    <text evidence="1">One of the primary rRNA binding proteins, it binds directly near the 3'-end of the 23S rRNA, where it nucleates assembly of the 50S subunit.</text>
</comment>
<comment type="subunit">
    <text evidence="1">Part of the 50S ribosomal subunit. Forms a cluster with proteins L14 and L19.</text>
</comment>
<comment type="PTM">
    <text evidence="1">Methylated by PrmB.</text>
</comment>
<comment type="similarity">
    <text evidence="1">Belongs to the universal ribosomal protein uL3 family.</text>
</comment>
<feature type="chain" id="PRO_1000141895" description="Large ribosomal subunit protein uL3">
    <location>
        <begin position="1"/>
        <end position="243"/>
    </location>
</feature>
<feature type="region of interest" description="Disordered" evidence="2">
    <location>
        <begin position="139"/>
        <end position="164"/>
    </location>
</feature>
<feature type="region of interest" description="Disordered" evidence="2">
    <location>
        <begin position="218"/>
        <end position="243"/>
    </location>
</feature>
<feature type="compositionally biased region" description="Basic and acidic residues" evidence="2">
    <location>
        <begin position="218"/>
        <end position="229"/>
    </location>
</feature>
<feature type="compositionally biased region" description="Low complexity" evidence="2">
    <location>
        <begin position="230"/>
        <end position="243"/>
    </location>
</feature>
<feature type="modified residue" description="N5-methylglutamine" evidence="1">
    <location>
        <position position="151"/>
    </location>
</feature>
<accession>B6JET3</accession>
<accession>F8BZC7</accession>
<reference key="1">
    <citation type="journal article" date="2008" name="J. Bacteriol.">
        <title>Genome sequence of the chemolithoautotrophic bacterium Oligotropha carboxidovorans OM5T.</title>
        <authorList>
            <person name="Paul D."/>
            <person name="Bridges S."/>
            <person name="Burgess S.C."/>
            <person name="Dandass Y."/>
            <person name="Lawrence M.L."/>
        </authorList>
    </citation>
    <scope>NUCLEOTIDE SEQUENCE [LARGE SCALE GENOMIC DNA]</scope>
    <source>
        <strain>ATCC 49405 / DSM 1227 / KCTC 32145 / OM5</strain>
    </source>
</reference>
<reference key="2">
    <citation type="journal article" date="2011" name="J. Bacteriol.">
        <title>Complete genome sequences of the chemolithoautotrophic Oligotropha carboxidovorans strains OM4 and OM5.</title>
        <authorList>
            <person name="Volland S."/>
            <person name="Rachinger M."/>
            <person name="Strittmatter A."/>
            <person name="Daniel R."/>
            <person name="Gottschalk G."/>
            <person name="Meyer O."/>
        </authorList>
    </citation>
    <scope>NUCLEOTIDE SEQUENCE [LARGE SCALE GENOMIC DNA]</scope>
    <source>
        <strain>ATCC 49405 / DSM 1227 / KCTC 32145 / OM5</strain>
    </source>
</reference>
<sequence>MRSGVIAQKVGMMRVFTEAGEHIPVTVLKLGNCQVVGHRTKDKNGYTALQLGAGARKSVYMPKAERGQFAVAKVEPKRKVAEFRVSEDAIIPVGAEIQADHFVVGQFVDVTGTSIGKGYAGGMKRWNFGGLRATHGVSVSHRSIGSTGGRQDPGKTFKNKKMPGHMGVDRITTLNLRVVQTDVERGLLLVEGAVPGSKGGWITVRDAVKKPLPKEAAKPGKFKLADGGDKAAAAPEATAGEGA</sequence>
<name>RL3_AFIC5</name>
<organism>
    <name type="scientific">Afipia carboxidovorans (strain ATCC 49405 / DSM 1227 / KCTC 32145 / OM5)</name>
    <name type="common">Oligotropha carboxidovorans</name>
    <dbReference type="NCBI Taxonomy" id="504832"/>
    <lineage>
        <taxon>Bacteria</taxon>
        <taxon>Pseudomonadati</taxon>
        <taxon>Pseudomonadota</taxon>
        <taxon>Alphaproteobacteria</taxon>
        <taxon>Hyphomicrobiales</taxon>
        <taxon>Nitrobacteraceae</taxon>
        <taxon>Afipia</taxon>
    </lineage>
</organism>
<keyword id="KW-0488">Methylation</keyword>
<keyword id="KW-1185">Reference proteome</keyword>
<keyword id="KW-0687">Ribonucleoprotein</keyword>
<keyword id="KW-0689">Ribosomal protein</keyword>
<keyword id="KW-0694">RNA-binding</keyword>
<keyword id="KW-0699">rRNA-binding</keyword>
<proteinExistence type="inferred from homology"/>